<sequence length="154" mass="17489">MRNYDLSPLLRQWIGFDKLASTMQGGQEPQGFPPYNIEKTDDNHYRISLALAGFKQSELDIEVEGPRLTVRGKPTPVEKQVEYLHQGLVRKEFSLTFTLAEHLNVDNAQFENGLLHIDLLRQVPEALQPQRIAIGSATPQERQVLESPEAPDQQ</sequence>
<protein>
    <recommendedName>
        <fullName evidence="1">Small heat shock protein IbpB</fullName>
    </recommendedName>
    <alternativeName>
        <fullName evidence="1">16 kDa heat shock protein B</fullName>
    </alternativeName>
</protein>
<organism>
    <name type="scientific">Yersinia pestis (strain Pestoides F)</name>
    <dbReference type="NCBI Taxonomy" id="386656"/>
    <lineage>
        <taxon>Bacteria</taxon>
        <taxon>Pseudomonadati</taxon>
        <taxon>Pseudomonadota</taxon>
        <taxon>Gammaproteobacteria</taxon>
        <taxon>Enterobacterales</taxon>
        <taxon>Yersiniaceae</taxon>
        <taxon>Yersinia</taxon>
    </lineage>
</organism>
<feature type="chain" id="PRO_1000022035" description="Small heat shock protein IbpB">
    <location>
        <begin position="1"/>
        <end position="154"/>
    </location>
</feature>
<feature type="domain" description="sHSP" evidence="2">
    <location>
        <begin position="26"/>
        <end position="137"/>
    </location>
</feature>
<reference key="1">
    <citation type="submission" date="2007-02" db="EMBL/GenBank/DDBJ databases">
        <title>Complete sequence of chromosome of Yersinia pestis Pestoides F.</title>
        <authorList>
            <consortium name="US DOE Joint Genome Institute"/>
            <person name="Copeland A."/>
            <person name="Lucas S."/>
            <person name="Lapidus A."/>
            <person name="Barry K."/>
            <person name="Detter J.C."/>
            <person name="Glavina del Rio T."/>
            <person name="Hammon N."/>
            <person name="Israni S."/>
            <person name="Dalin E."/>
            <person name="Tice H."/>
            <person name="Pitluck S."/>
            <person name="Di Bartolo G."/>
            <person name="Chain P."/>
            <person name="Malfatti S."/>
            <person name="Shin M."/>
            <person name="Vergez L."/>
            <person name="Schmutz J."/>
            <person name="Larimer F."/>
            <person name="Land M."/>
            <person name="Hauser L."/>
            <person name="Worsham P."/>
            <person name="Chu M."/>
            <person name="Bearden S."/>
            <person name="Garcia E."/>
            <person name="Richardson P."/>
        </authorList>
    </citation>
    <scope>NUCLEOTIDE SEQUENCE [LARGE SCALE GENOMIC DNA]</scope>
    <source>
        <strain>Pestoides F</strain>
    </source>
</reference>
<accession>A4TGM7</accession>
<dbReference type="EMBL" id="CP000668">
    <property type="protein sequence ID" value="ABP38440.1"/>
    <property type="molecule type" value="Genomic_DNA"/>
</dbReference>
<dbReference type="RefSeq" id="WP_002209635.1">
    <property type="nucleotide sequence ID" value="NZ_CP009715.1"/>
</dbReference>
<dbReference type="SMR" id="A4TGM7"/>
<dbReference type="GeneID" id="57974634"/>
<dbReference type="KEGG" id="ypp:YPDSF_0013"/>
<dbReference type="PATRIC" id="fig|386656.14.peg.565"/>
<dbReference type="GO" id="GO:0005737">
    <property type="term" value="C:cytoplasm"/>
    <property type="evidence" value="ECO:0007669"/>
    <property type="project" value="UniProtKB-SubCell"/>
</dbReference>
<dbReference type="GO" id="GO:0050821">
    <property type="term" value="P:protein stabilization"/>
    <property type="evidence" value="ECO:0007669"/>
    <property type="project" value="UniProtKB-UniRule"/>
</dbReference>
<dbReference type="CDD" id="cd06470">
    <property type="entry name" value="ACD_IbpA-B_like"/>
    <property type="match status" value="1"/>
</dbReference>
<dbReference type="Gene3D" id="2.60.40.790">
    <property type="match status" value="1"/>
</dbReference>
<dbReference type="HAMAP" id="MF_02001">
    <property type="entry name" value="HSP20_IbpB"/>
    <property type="match status" value="1"/>
</dbReference>
<dbReference type="InterPro" id="IPR002068">
    <property type="entry name" value="A-crystallin/Hsp20_dom"/>
</dbReference>
<dbReference type="InterPro" id="IPR037913">
    <property type="entry name" value="ACD_IbpA/B"/>
</dbReference>
<dbReference type="InterPro" id="IPR008978">
    <property type="entry name" value="HSP20-like_chaperone"/>
</dbReference>
<dbReference type="InterPro" id="IPR022848">
    <property type="entry name" value="HSP20_IbpB"/>
</dbReference>
<dbReference type="NCBIfam" id="NF008618">
    <property type="entry name" value="PRK11597.1"/>
    <property type="match status" value="1"/>
</dbReference>
<dbReference type="PANTHER" id="PTHR47062">
    <property type="match status" value="1"/>
</dbReference>
<dbReference type="PANTHER" id="PTHR47062:SF2">
    <property type="entry name" value="SMALL HEAT SHOCK PROTEIN IBPB"/>
    <property type="match status" value="1"/>
</dbReference>
<dbReference type="Pfam" id="PF00011">
    <property type="entry name" value="HSP20"/>
    <property type="match status" value="1"/>
</dbReference>
<dbReference type="SUPFAM" id="SSF49764">
    <property type="entry name" value="HSP20-like chaperones"/>
    <property type="match status" value="1"/>
</dbReference>
<dbReference type="PROSITE" id="PS01031">
    <property type="entry name" value="SHSP"/>
    <property type="match status" value="1"/>
</dbReference>
<proteinExistence type="inferred from homology"/>
<evidence type="ECO:0000255" key="1">
    <source>
        <dbReference type="HAMAP-Rule" id="MF_02001"/>
    </source>
</evidence>
<evidence type="ECO:0000255" key="2">
    <source>
        <dbReference type="PROSITE-ProRule" id="PRU00285"/>
    </source>
</evidence>
<name>IBPB_YERPP</name>
<comment type="function">
    <text evidence="1">Associates with aggregated proteins, together with IbpA, to stabilize and protect them from irreversible denaturation and extensive proteolysis during heat shock and oxidative stress. Aggregated proteins bound to the IbpAB complex are more efficiently refolded and reactivated by the ATP-dependent chaperone systems ClpB and DnaK/DnaJ/GrpE. Its activity is ATP-independent.</text>
</comment>
<comment type="subunit">
    <text evidence="1">Homodimer. Forms homomultimers of about 100-150 subunits at optimal growth temperatures. Conformation changes to oligomers at high temperatures or high ionic concentrations. The decrease in size of the multimers is accompanied by an increase in chaperone activity.</text>
</comment>
<comment type="subcellular location">
    <subcellularLocation>
        <location evidence="1">Cytoplasm</location>
    </subcellularLocation>
</comment>
<comment type="domain">
    <text evidence="1">The N- and C-terminal flexible termini are involved in oligomerization and in the binding of non-native substrate proteins, and are essential for chaperone activity.</text>
</comment>
<comment type="similarity">
    <text evidence="1 2">Belongs to the small heat shock protein (HSP20) family.</text>
</comment>
<keyword id="KW-0143">Chaperone</keyword>
<keyword id="KW-0963">Cytoplasm</keyword>
<keyword id="KW-0346">Stress response</keyword>
<gene>
    <name evidence="1" type="primary">ibpB</name>
    <name type="ordered locus">YPDSF_0013</name>
</gene>